<dbReference type="GO" id="GO:0005576">
    <property type="term" value="C:extracellular region"/>
    <property type="evidence" value="ECO:0007669"/>
    <property type="project" value="UniProtKB-SubCell"/>
</dbReference>
<proteinExistence type="evidence at protein level"/>
<sequence>PHWLFFGVSVLC</sequence>
<protein>
    <recommendedName>
        <fullName evidence="2">Cryptide Pep-16</fullName>
    </recommendedName>
</protein>
<organism>
    <name type="scientific">Tityus obscurus</name>
    <name type="common">Amazonian scorpion</name>
    <name type="synonym">Tityus cambridgei</name>
    <dbReference type="NCBI Taxonomy" id="1221240"/>
    <lineage>
        <taxon>Eukaryota</taxon>
        <taxon>Metazoa</taxon>
        <taxon>Ecdysozoa</taxon>
        <taxon>Arthropoda</taxon>
        <taxon>Chelicerata</taxon>
        <taxon>Arachnida</taxon>
        <taxon>Scorpiones</taxon>
        <taxon>Buthida</taxon>
        <taxon>Buthoidea</taxon>
        <taxon>Buthidae</taxon>
        <taxon>Tityus</taxon>
    </lineage>
</organism>
<keyword id="KW-0903">Direct protein sequencing</keyword>
<keyword id="KW-0964">Secreted</keyword>
<feature type="peptide" id="PRO_0000461751" description="Cryptide Pep-16" evidence="1">
    <location>
        <begin position="1"/>
        <end position="12"/>
    </location>
</feature>
<evidence type="ECO:0000269" key="1">
    <source>
    </source>
</evidence>
<evidence type="ECO:0000303" key="2">
    <source>
    </source>
</evidence>
<evidence type="ECO:0000305" key="3">
    <source>
    </source>
</evidence>
<name>CRY16_TITOB</name>
<comment type="subcellular location">
    <subcellularLocation>
        <location evidence="1">Secreted</location>
    </subcellularLocation>
</comment>
<comment type="tissue specificity">
    <text evidence="3">Expressed by the venom gland.</text>
</comment>
<accession>P0DRG1</accession>
<reference key="1">
    <citation type="journal article" date="2018" name="J. Proteomics">
        <title>Profiling the short, linear, non-disulfide bond-containing peptidome from the venom of the scorpion Tityus obscurus.</title>
        <authorList>
            <person name="Dias N.B."/>
            <person name="de Souza B.M."/>
            <person name="Cocchi F.K."/>
            <person name="Chalkidis H.M."/>
            <person name="Dorce V.A.C."/>
            <person name="Palma M.S."/>
        </authorList>
    </citation>
    <scope>PROTEIN SEQUENCE</scope>
    <scope>IDENTIFICATION BY MASS SPECTROMETRY</scope>
    <scope>SUBCELLULAR LOCATION</scope>
    <source>
        <tissue>Venom</tissue>
    </source>
</reference>